<evidence type="ECO:0000250" key="1"/>
<evidence type="ECO:0000255" key="2">
    <source>
        <dbReference type="HAMAP-Rule" id="MF_01163"/>
    </source>
</evidence>
<feature type="chain" id="PRO_0000348620" description="5-formaminoimidazole-4-carboxamide-1-(beta)-D-ribofuranosyl 5'-monophosphate synthetase">
    <location>
        <begin position="1"/>
        <end position="361"/>
    </location>
</feature>
<feature type="domain" description="ATP-grasp" evidence="2">
    <location>
        <begin position="116"/>
        <end position="348"/>
    </location>
</feature>
<feature type="binding site" evidence="2">
    <location>
        <position position="27"/>
    </location>
    <ligand>
        <name>5-amino-1-(5-phospho-beta-D-ribosyl)imidazole-4-carboxamide</name>
        <dbReference type="ChEBI" id="CHEBI:58475"/>
    </ligand>
</feature>
<feature type="binding site" evidence="2">
    <location>
        <position position="94"/>
    </location>
    <ligand>
        <name>5-amino-1-(5-phospho-beta-D-ribosyl)imidazole-4-carboxamide</name>
        <dbReference type="ChEBI" id="CHEBI:58475"/>
    </ligand>
</feature>
<feature type="binding site" evidence="2">
    <location>
        <begin position="146"/>
        <end position="208"/>
    </location>
    <ligand>
        <name>ATP</name>
        <dbReference type="ChEBI" id="CHEBI:30616"/>
    </ligand>
</feature>
<feature type="binding site" evidence="2">
    <location>
        <position position="230"/>
    </location>
    <ligand>
        <name>ATP</name>
        <dbReference type="ChEBI" id="CHEBI:30616"/>
    </ligand>
</feature>
<feature type="binding site" evidence="2">
    <location>
        <position position="258"/>
    </location>
    <ligand>
        <name>5-amino-1-(5-phospho-beta-D-ribosyl)imidazole-4-carboxamide</name>
        <dbReference type="ChEBI" id="CHEBI:58475"/>
    </ligand>
</feature>
<feature type="binding site" evidence="2">
    <location>
        <position position="297"/>
    </location>
    <ligand>
        <name>Mg(2+)</name>
        <dbReference type="ChEBI" id="CHEBI:18420"/>
    </ligand>
</feature>
<feature type="binding site" evidence="2">
    <location>
        <position position="310"/>
    </location>
    <ligand>
        <name>Mg(2+)</name>
        <dbReference type="ChEBI" id="CHEBI:18420"/>
    </ligand>
</feature>
<keyword id="KW-0067">ATP-binding</keyword>
<keyword id="KW-0436">Ligase</keyword>
<keyword id="KW-0460">Magnesium</keyword>
<keyword id="KW-0464">Manganese</keyword>
<keyword id="KW-0479">Metal-binding</keyword>
<keyword id="KW-0547">Nucleotide-binding</keyword>
<keyword id="KW-0658">Purine biosynthesis</keyword>
<reference key="1">
    <citation type="submission" date="2007-06" db="EMBL/GenBank/DDBJ databases">
        <title>Complete sequence of Methanococcus aeolicus Nankai-3.</title>
        <authorList>
            <consortium name="US DOE Joint Genome Institute"/>
            <person name="Copeland A."/>
            <person name="Lucas S."/>
            <person name="Lapidus A."/>
            <person name="Barry K."/>
            <person name="Glavina del Rio T."/>
            <person name="Dalin E."/>
            <person name="Tice H."/>
            <person name="Pitluck S."/>
            <person name="Chain P."/>
            <person name="Malfatti S."/>
            <person name="Shin M."/>
            <person name="Vergez L."/>
            <person name="Schmutz J."/>
            <person name="Larimer F."/>
            <person name="Land M."/>
            <person name="Hauser L."/>
            <person name="Kyrpides N."/>
            <person name="Lykidis A."/>
            <person name="Sieprawska-Lupa M."/>
            <person name="Whitman W.B."/>
            <person name="Richardson P."/>
        </authorList>
    </citation>
    <scope>NUCLEOTIDE SEQUENCE [LARGE SCALE GENOMIC DNA]</scope>
    <source>
        <strain>ATCC BAA-1280 / DSM 17508 / OCM 812 / Nankai-3</strain>
    </source>
</reference>
<sequence>MISKEEILSIYEGYNKEEITIVTVGSHTSLHILKGAKLEGFSTAVITTKDRATPYKRFGVADKYIYVDNFSDISNEEIQKQLIEMNAIIIPHGSFIAYCGLDNLENNFKVPMFGNRQILRWEAERDLEGKLLKESGLRIPKKLNSPDEINCPVMVKFPGARGGRGYFPCSTTEEFWKKVEIFKERGILTDEDVGNAHIEEYVVGTNYCIHYFYSPLKNQVELMGIDSRYESNIDGIVRVPAKDQMELDINPSYVISGNFPVVIRESLLPQVFDMGDKLVAKAEEMVAPGMIGPFCLQSLCNDSLELVVFEMSARIDGGTNSFMNGSAYSCLYSGEPLSMGQRIAKEIKLALELDMMDKILY</sequence>
<proteinExistence type="inferred from homology"/>
<dbReference type="EC" id="6.3.4.23" evidence="2"/>
<dbReference type="EMBL" id="CP000743">
    <property type="protein sequence ID" value="ABR56903.1"/>
    <property type="molecule type" value="Genomic_DNA"/>
</dbReference>
<dbReference type="RefSeq" id="WP_011974035.1">
    <property type="nucleotide sequence ID" value="NC_009635.1"/>
</dbReference>
<dbReference type="SMR" id="A6UWN1"/>
<dbReference type="STRING" id="419665.Maeo_1327"/>
<dbReference type="GeneID" id="5327694"/>
<dbReference type="KEGG" id="mae:Maeo_1327"/>
<dbReference type="eggNOG" id="arCOG04346">
    <property type="taxonomic scope" value="Archaea"/>
</dbReference>
<dbReference type="HOGENOM" id="CLU_065084_0_0_2"/>
<dbReference type="OrthoDB" id="98133at2157"/>
<dbReference type="UniPathway" id="UPA00074">
    <property type="reaction ID" value="UER00134"/>
</dbReference>
<dbReference type="Proteomes" id="UP000001106">
    <property type="component" value="Chromosome"/>
</dbReference>
<dbReference type="GO" id="GO:0005524">
    <property type="term" value="F:ATP binding"/>
    <property type="evidence" value="ECO:0007669"/>
    <property type="project" value="UniProtKB-KW"/>
</dbReference>
<dbReference type="GO" id="GO:0016879">
    <property type="term" value="F:ligase activity, forming carbon-nitrogen bonds"/>
    <property type="evidence" value="ECO:0007669"/>
    <property type="project" value="UniProtKB-UniRule"/>
</dbReference>
<dbReference type="GO" id="GO:0000287">
    <property type="term" value="F:magnesium ion binding"/>
    <property type="evidence" value="ECO:0007669"/>
    <property type="project" value="InterPro"/>
</dbReference>
<dbReference type="GO" id="GO:0006189">
    <property type="term" value="P:'de novo' IMP biosynthetic process"/>
    <property type="evidence" value="ECO:0007669"/>
    <property type="project" value="UniProtKB-UniRule"/>
</dbReference>
<dbReference type="Gene3D" id="3.40.50.20">
    <property type="match status" value="1"/>
</dbReference>
<dbReference type="Gene3D" id="3.30.1490.20">
    <property type="entry name" value="ATP-grasp fold, A domain"/>
    <property type="match status" value="1"/>
</dbReference>
<dbReference type="Gene3D" id="3.30.470.20">
    <property type="entry name" value="ATP-grasp fold, B domain"/>
    <property type="match status" value="1"/>
</dbReference>
<dbReference type="HAMAP" id="MF_01163">
    <property type="entry name" value="IMP_biosynth_PurP"/>
    <property type="match status" value="1"/>
</dbReference>
<dbReference type="InterPro" id="IPR011761">
    <property type="entry name" value="ATP-grasp"/>
</dbReference>
<dbReference type="InterPro" id="IPR013815">
    <property type="entry name" value="ATP_grasp_subdomain_1"/>
</dbReference>
<dbReference type="InterPro" id="IPR023656">
    <property type="entry name" value="IMP_biosynth_PurP"/>
</dbReference>
<dbReference type="InterPro" id="IPR009720">
    <property type="entry name" value="IMP_biosynth_PurP_C"/>
</dbReference>
<dbReference type="InterPro" id="IPR010672">
    <property type="entry name" value="IMP_biosynth_PurP_N"/>
</dbReference>
<dbReference type="InterPro" id="IPR016185">
    <property type="entry name" value="PreATP-grasp_dom_sf"/>
</dbReference>
<dbReference type="NCBIfam" id="NF009780">
    <property type="entry name" value="PRK13278.1-5"/>
    <property type="match status" value="1"/>
</dbReference>
<dbReference type="PANTHER" id="PTHR38147:SF2">
    <property type="entry name" value="5-FORMAMINOIMIDAZOLE-4-CARBOXAMIDE-1-(BETA)-D-RIBOFURANOSYL 5'-MONOPHOSPHATE SYNTHETASE"/>
    <property type="match status" value="1"/>
</dbReference>
<dbReference type="PANTHER" id="PTHR38147">
    <property type="entry name" value="5-FORMAMINOIMIDAZOLE-4-CARBOXAMIDE-1-(BETA)-D-RIBOFURANOSYL 5'-MONOPHOSPHATE SYNTHETASE-RELATED"/>
    <property type="match status" value="1"/>
</dbReference>
<dbReference type="Pfam" id="PF06849">
    <property type="entry name" value="DUF1246"/>
    <property type="match status" value="1"/>
</dbReference>
<dbReference type="Pfam" id="PF06973">
    <property type="entry name" value="DUF1297"/>
    <property type="match status" value="1"/>
</dbReference>
<dbReference type="PIRSF" id="PIRSF004602">
    <property type="entry name" value="ATPgrasp_PurP"/>
    <property type="match status" value="1"/>
</dbReference>
<dbReference type="SUPFAM" id="SSF56059">
    <property type="entry name" value="Glutathione synthetase ATP-binding domain-like"/>
    <property type="match status" value="1"/>
</dbReference>
<dbReference type="SUPFAM" id="SSF52440">
    <property type="entry name" value="PreATP-grasp domain"/>
    <property type="match status" value="1"/>
</dbReference>
<dbReference type="PROSITE" id="PS50975">
    <property type="entry name" value="ATP_GRASP"/>
    <property type="match status" value="1"/>
</dbReference>
<comment type="function">
    <text evidence="2">Catalyzes the ATP- and formate-dependent formylation of 5-aminoimidazole-4-carboxamide-1-beta-d-ribofuranosyl 5'-monophosphate (AICAR) to 5-formaminoimidazole-4-carboxamide-1-beta-d-ribofuranosyl 5'-monophosphate (FAICAR) in the absence of folates.</text>
</comment>
<comment type="catalytic activity">
    <reaction evidence="2">
        <text>5-amino-1-(5-phospho-beta-D-ribosyl)imidazole-4-carboxamide + formate + ATP = 5-formamido-1-(5-phospho-D-ribosyl)imidazole-4-carboxamide + ADP + phosphate</text>
        <dbReference type="Rhea" id="RHEA:24836"/>
        <dbReference type="ChEBI" id="CHEBI:15740"/>
        <dbReference type="ChEBI" id="CHEBI:30616"/>
        <dbReference type="ChEBI" id="CHEBI:43474"/>
        <dbReference type="ChEBI" id="CHEBI:58467"/>
        <dbReference type="ChEBI" id="CHEBI:58475"/>
        <dbReference type="ChEBI" id="CHEBI:456216"/>
        <dbReference type="EC" id="6.3.4.23"/>
    </reaction>
</comment>
<comment type="cofactor">
    <cofactor evidence="1">
        <name>Mg(2+)</name>
        <dbReference type="ChEBI" id="CHEBI:18420"/>
    </cofactor>
    <cofactor evidence="1">
        <name>Mn(2+)</name>
        <dbReference type="ChEBI" id="CHEBI:29035"/>
    </cofactor>
    <text evidence="1">Binds 1 Mg(2+) or Mn(2+) ion per subunit.</text>
</comment>
<comment type="pathway">
    <text evidence="2">Purine metabolism; IMP biosynthesis via de novo pathway; 5-formamido-1-(5-phospho-D-ribosyl)imidazole-4-carboxamide from 5-amino-1-(5-phospho-D-ribosyl)imidazole-4-carboxamide (formate route): step 1/1.</text>
</comment>
<comment type="similarity">
    <text evidence="2">Belongs to the phosphohexose mutase family.</text>
</comment>
<gene>
    <name evidence="2" type="primary">purP</name>
    <name type="ordered locus">Maeo_1327</name>
</gene>
<protein>
    <recommendedName>
        <fullName evidence="2">5-formaminoimidazole-4-carboxamide-1-(beta)-D-ribofuranosyl 5'-monophosphate synthetase</fullName>
        <ecNumber evidence="2">6.3.4.23</ecNumber>
    </recommendedName>
    <alternativeName>
        <fullName evidence="2">5-aminoimidazole-4-carboxamide-1-beta-D-ribofuranosyl 5'-monophosphate--formate ligase</fullName>
    </alternativeName>
</protein>
<name>PURP_META3</name>
<accession>A6UWN1</accession>
<organism>
    <name type="scientific">Methanococcus aeolicus (strain ATCC BAA-1280 / DSM 17508 / OCM 812 / Nankai-3)</name>
    <dbReference type="NCBI Taxonomy" id="419665"/>
    <lineage>
        <taxon>Archaea</taxon>
        <taxon>Methanobacteriati</taxon>
        <taxon>Methanobacteriota</taxon>
        <taxon>Methanomada group</taxon>
        <taxon>Methanococci</taxon>
        <taxon>Methanococcales</taxon>
        <taxon>Methanococcaceae</taxon>
        <taxon>Methanococcus</taxon>
    </lineage>
</organism>